<accession>P11747</accession>
<accession>D6W0I7</accession>
<name>TAF13_YEAST</name>
<protein>
    <recommendedName>
        <fullName>Transcription initiation factor TFIID subunit 13</fullName>
    </recommendedName>
    <alternativeName>
        <fullName>Function unknown 81 protein</fullName>
    </alternativeName>
    <alternativeName>
        <fullName>TAFII-19</fullName>
        <shortName>TAFII19</shortName>
    </alternativeName>
    <alternativeName>
        <fullName>TBP-associated factor 13</fullName>
    </alternativeName>
    <alternativeName>
        <fullName>TBP-associated factor 19 kDa</fullName>
    </alternativeName>
</protein>
<gene>
    <name type="primary">TAF13</name>
    <name type="synonym">FUN81</name>
    <name type="synonym">TAF19</name>
    <name type="ordered locus">YML098W</name>
</gene>
<feature type="chain" id="PRO_0000118912" description="Transcription initiation factor TFIID subunit 13">
    <location>
        <begin position="1"/>
        <end position="167"/>
    </location>
</feature>
<feature type="domain" description="Histone-fold">
    <location>
        <begin position="10"/>
        <end position="74"/>
    </location>
</feature>
<feature type="region of interest" description="Disordered" evidence="2">
    <location>
        <begin position="97"/>
        <end position="167"/>
    </location>
</feature>
<feature type="coiled-coil region" evidence="1">
    <location>
        <begin position="109"/>
        <end position="129"/>
    </location>
</feature>
<feature type="compositionally biased region" description="Acidic residues" evidence="2">
    <location>
        <begin position="114"/>
        <end position="136"/>
    </location>
</feature>
<feature type="compositionally biased region" description="Basic residues" evidence="2">
    <location>
        <begin position="152"/>
        <end position="167"/>
    </location>
</feature>
<feature type="modified residue" description="Phosphothreonine" evidence="11">
    <location>
        <position position="131"/>
    </location>
</feature>
<feature type="sequence conflict" description="In Ref. 1; AAA34610." evidence="10" ref="1">
    <original>AA</original>
    <variation>GV</variation>
    <location>
        <begin position="137"/>
        <end position="138"/>
    </location>
</feature>
<feature type="sequence conflict" description="In Ref. 1; AAA34610." evidence="10" ref="1">
    <original>G</original>
    <variation>A</variation>
    <location>
        <position position="158"/>
    </location>
</feature>
<dbReference type="EMBL" id="M17512">
    <property type="protein sequence ID" value="AAA34610.1"/>
    <property type="molecule type" value="Genomic_DNA"/>
</dbReference>
<dbReference type="EMBL" id="Z46660">
    <property type="protein sequence ID" value="CAA86639.1"/>
    <property type="molecule type" value="Genomic_DNA"/>
</dbReference>
<dbReference type="EMBL" id="AY557763">
    <property type="protein sequence ID" value="AAS56089.1"/>
    <property type="molecule type" value="Genomic_DNA"/>
</dbReference>
<dbReference type="EMBL" id="BK006946">
    <property type="protein sequence ID" value="DAA09801.1"/>
    <property type="molecule type" value="Genomic_DNA"/>
</dbReference>
<dbReference type="PIR" id="S49628">
    <property type="entry name" value="S49628"/>
</dbReference>
<dbReference type="RefSeq" id="NP_013611.1">
    <property type="nucleotide sequence ID" value="NM_001182458.1"/>
</dbReference>
<dbReference type="SMR" id="P11747"/>
<dbReference type="BioGRID" id="35045">
    <property type="interactions" value="405"/>
</dbReference>
<dbReference type="ComplexPortal" id="CPX-1642">
    <property type="entry name" value="General transcription factor complex TFIID"/>
</dbReference>
<dbReference type="DIP" id="DIP-2054N"/>
<dbReference type="FunCoup" id="P11747">
    <property type="interactions" value="471"/>
</dbReference>
<dbReference type="IntAct" id="P11747">
    <property type="interactions" value="28"/>
</dbReference>
<dbReference type="MINT" id="P11747"/>
<dbReference type="STRING" id="4932.YML098W"/>
<dbReference type="iPTMnet" id="P11747"/>
<dbReference type="PaxDb" id="4932-YML098W"/>
<dbReference type="PeptideAtlas" id="P11747"/>
<dbReference type="EnsemblFungi" id="YML098W_mRNA">
    <property type="protein sequence ID" value="YML098W"/>
    <property type="gene ID" value="YML098W"/>
</dbReference>
<dbReference type="GeneID" id="854875"/>
<dbReference type="KEGG" id="sce:YML098W"/>
<dbReference type="AGR" id="SGD:S000004564"/>
<dbReference type="SGD" id="S000004564">
    <property type="gene designation" value="TAF13"/>
</dbReference>
<dbReference type="VEuPathDB" id="FungiDB:YML098W"/>
<dbReference type="eggNOG" id="KOG3901">
    <property type="taxonomic scope" value="Eukaryota"/>
</dbReference>
<dbReference type="GeneTree" id="ENSGT00390000012981"/>
<dbReference type="HOGENOM" id="CLU_076665_0_2_1"/>
<dbReference type="InParanoid" id="P11747"/>
<dbReference type="OMA" id="QLMKDAD"/>
<dbReference type="OrthoDB" id="10266074at2759"/>
<dbReference type="BioCyc" id="YEAST:G3O-32683-MONOMER"/>
<dbReference type="Reactome" id="R-SCE-674695">
    <property type="pathway name" value="RNA Polymerase II Pre-transcription Events"/>
</dbReference>
<dbReference type="Reactome" id="R-SCE-6807505">
    <property type="pathway name" value="RNA polymerase II transcribes snRNA genes"/>
</dbReference>
<dbReference type="Reactome" id="R-SCE-73776">
    <property type="pathway name" value="RNA Polymerase II Promoter Escape"/>
</dbReference>
<dbReference type="Reactome" id="R-SCE-73779">
    <property type="pathway name" value="RNA Polymerase II Transcription Pre-Initiation And Promoter Opening"/>
</dbReference>
<dbReference type="Reactome" id="R-SCE-75953">
    <property type="pathway name" value="RNA Polymerase II Transcription Initiation"/>
</dbReference>
<dbReference type="Reactome" id="R-SCE-76042">
    <property type="pathway name" value="RNA Polymerase II Transcription Initiation And Promoter Clearance"/>
</dbReference>
<dbReference type="BioGRID-ORCS" id="854875">
    <property type="hits" value="2 hits in 10 CRISPR screens"/>
</dbReference>
<dbReference type="PRO" id="PR:P11747"/>
<dbReference type="Proteomes" id="UP000002311">
    <property type="component" value="Chromosome XIII"/>
</dbReference>
<dbReference type="RNAct" id="P11747">
    <property type="molecule type" value="protein"/>
</dbReference>
<dbReference type="GO" id="GO:0005634">
    <property type="term" value="C:nucleus"/>
    <property type="evidence" value="ECO:0007005"/>
    <property type="project" value="SGD"/>
</dbReference>
<dbReference type="GO" id="GO:0005669">
    <property type="term" value="C:transcription factor TFIID complex"/>
    <property type="evidence" value="ECO:0000314"/>
    <property type="project" value="SGD"/>
</dbReference>
<dbReference type="GO" id="GO:0046982">
    <property type="term" value="F:protein heterodimerization activity"/>
    <property type="evidence" value="ECO:0007669"/>
    <property type="project" value="InterPro"/>
</dbReference>
<dbReference type="GO" id="GO:0045944">
    <property type="term" value="P:positive regulation of transcription by RNA polymerase II"/>
    <property type="evidence" value="ECO:0000314"/>
    <property type="project" value="ComplexPortal"/>
</dbReference>
<dbReference type="GO" id="GO:0051123">
    <property type="term" value="P:RNA polymerase II preinitiation complex assembly"/>
    <property type="evidence" value="ECO:0000315"/>
    <property type="project" value="SGD"/>
</dbReference>
<dbReference type="GO" id="GO:0006366">
    <property type="term" value="P:transcription by RNA polymerase II"/>
    <property type="evidence" value="ECO:0000314"/>
    <property type="project" value="SGD"/>
</dbReference>
<dbReference type="CDD" id="cd07978">
    <property type="entry name" value="HFD_TAF13"/>
    <property type="match status" value="1"/>
</dbReference>
<dbReference type="FunFam" id="1.10.20.10:FF:000071">
    <property type="entry name" value="Transcription factor TFIID complex subunit"/>
    <property type="match status" value="1"/>
</dbReference>
<dbReference type="Gene3D" id="1.10.20.10">
    <property type="entry name" value="Histone, subunit A"/>
    <property type="match status" value="1"/>
</dbReference>
<dbReference type="InterPro" id="IPR009072">
    <property type="entry name" value="Histone-fold"/>
</dbReference>
<dbReference type="InterPro" id="IPR003195">
    <property type="entry name" value="TFIID_TAF13"/>
</dbReference>
<dbReference type="PANTHER" id="PTHR11380:SF5">
    <property type="entry name" value="TRANSCRIPTION INITIATION FACTOR TFIID SUBUNIT 13"/>
    <property type="match status" value="1"/>
</dbReference>
<dbReference type="PANTHER" id="PTHR11380">
    <property type="entry name" value="TRANSCRIPTION INITIATION FACTOR TFIID/SUPT3-RELATED"/>
    <property type="match status" value="1"/>
</dbReference>
<dbReference type="Pfam" id="PF02269">
    <property type="entry name" value="TFIID-18kDa"/>
    <property type="match status" value="1"/>
</dbReference>
<dbReference type="SUPFAM" id="SSF47113">
    <property type="entry name" value="Histone-fold"/>
    <property type="match status" value="1"/>
</dbReference>
<reference key="1">
    <citation type="journal article" date="1987" name="Gene">
        <title>Characterization of two new genes essential for vegetative growth in Saccharomyces cerevisiae: nucleotide sequence determination and chromosome mapping.</title>
        <authorList>
            <person name="Dubois E."/>
            <person name="Bercy J."/>
            <person name="Descamps F."/>
            <person name="Messenguy F."/>
        </authorList>
    </citation>
    <scope>NUCLEOTIDE SEQUENCE [GENOMIC DNA]</scope>
</reference>
<reference key="2">
    <citation type="journal article" date="1997" name="Nature">
        <title>The nucleotide sequence of Saccharomyces cerevisiae chromosome XIII.</title>
        <authorList>
            <person name="Bowman S."/>
            <person name="Churcher C.M."/>
            <person name="Badcock K."/>
            <person name="Brown D."/>
            <person name="Chillingworth T."/>
            <person name="Connor R."/>
            <person name="Dedman K."/>
            <person name="Devlin K."/>
            <person name="Gentles S."/>
            <person name="Hamlin N."/>
            <person name="Hunt S."/>
            <person name="Jagels K."/>
            <person name="Lye G."/>
            <person name="Moule S."/>
            <person name="Odell C."/>
            <person name="Pearson D."/>
            <person name="Rajandream M.A."/>
            <person name="Rice P."/>
            <person name="Skelton J."/>
            <person name="Walsh S.V."/>
            <person name="Whitehead S."/>
            <person name="Barrell B.G."/>
        </authorList>
    </citation>
    <scope>NUCLEOTIDE SEQUENCE [LARGE SCALE GENOMIC DNA]</scope>
    <source>
        <strain>ATCC 204508 / S288c</strain>
    </source>
</reference>
<reference key="3">
    <citation type="journal article" date="2014" name="G3 (Bethesda)">
        <title>The reference genome sequence of Saccharomyces cerevisiae: Then and now.</title>
        <authorList>
            <person name="Engel S.R."/>
            <person name="Dietrich F.S."/>
            <person name="Fisk D.G."/>
            <person name="Binkley G."/>
            <person name="Balakrishnan R."/>
            <person name="Costanzo M.C."/>
            <person name="Dwight S.S."/>
            <person name="Hitz B.C."/>
            <person name="Karra K."/>
            <person name="Nash R.S."/>
            <person name="Weng S."/>
            <person name="Wong E.D."/>
            <person name="Lloyd P."/>
            <person name="Skrzypek M.S."/>
            <person name="Miyasato S.R."/>
            <person name="Simison M."/>
            <person name="Cherry J.M."/>
        </authorList>
    </citation>
    <scope>GENOME REANNOTATION</scope>
    <source>
        <strain>ATCC 204508 / S288c</strain>
    </source>
</reference>
<reference key="4">
    <citation type="journal article" date="2007" name="Genome Res.">
        <title>Approaching a complete repository of sequence-verified protein-encoding clones for Saccharomyces cerevisiae.</title>
        <authorList>
            <person name="Hu Y."/>
            <person name="Rolfs A."/>
            <person name="Bhullar B."/>
            <person name="Murthy T.V.S."/>
            <person name="Zhu C."/>
            <person name="Berger M.F."/>
            <person name="Camargo A.A."/>
            <person name="Kelley F."/>
            <person name="McCarron S."/>
            <person name="Jepson D."/>
            <person name="Richardson A."/>
            <person name="Raphael J."/>
            <person name="Moreira D."/>
            <person name="Taycher E."/>
            <person name="Zuo D."/>
            <person name="Mohr S."/>
            <person name="Kane M.F."/>
            <person name="Williamson J."/>
            <person name="Simpson A.J.G."/>
            <person name="Bulyk M.L."/>
            <person name="Harlow E."/>
            <person name="Marsischky G."/>
            <person name="Kolodner R.D."/>
            <person name="LaBaer J."/>
        </authorList>
    </citation>
    <scope>NUCLEOTIDE SEQUENCE [GENOMIC DNA]</scope>
    <source>
        <strain>ATCC 204508 / S288c</strain>
    </source>
</reference>
<reference key="5">
    <citation type="journal article" date="1998" name="Cell">
        <title>Human TAF(II)28 and TAF(II)18 interact through a histone fold encoded by atypical evolutionary conserved motifs also found in the SPT3 family.</title>
        <authorList>
            <person name="Birck C."/>
            <person name="Poch O."/>
            <person name="Romier C."/>
            <person name="Ruff M."/>
            <person name="Mengus G."/>
            <person name="Lavigne A.C."/>
            <person name="Davidson I."/>
            <person name="Moras D."/>
        </authorList>
    </citation>
    <scope>FUNCTION</scope>
    <scope>TAF-TAF INTERACTION THROUGH HISTONE-FOLD DOMAIN</scope>
</reference>
<reference key="6">
    <citation type="journal article" date="2000" name="J. Biol. Chem.">
        <title>Identification of two novel TAF subunits of the yeast Saccharomyces cerevisiae TFIID complex.</title>
        <authorList>
            <person name="Sanders S.L."/>
            <person name="Weil P.A."/>
        </authorList>
    </citation>
    <scope>FUNCTION</scope>
    <scope>SUBUNIT</scope>
</reference>
<reference key="7">
    <citation type="journal article" date="2001" name="Trends Biochem. Sci.">
        <title>The histone fold is a key structural motif of transcription factor TFIID.</title>
        <authorList>
            <person name="Gangloff Y.G."/>
            <person name="Romier C."/>
            <person name="Thuault S."/>
            <person name="Werten S."/>
            <person name="Davidson I."/>
        </authorList>
    </citation>
    <scope>FUNCTION</scope>
    <scope>HISTONE-FOLD DOMAIN CHARACTERIZATION</scope>
</reference>
<reference key="8">
    <citation type="journal article" date="2002" name="Mol. Cell. Biol.">
        <title>Molecular characterization of Saccharomyces cerevisiae TFIID.</title>
        <authorList>
            <person name="Sanders S.L."/>
            <person name="Garbett K.A."/>
            <person name="Weil P.A."/>
        </authorList>
    </citation>
    <scope>FUNCTION</scope>
    <scope>TFIID STOICHIOMETRY</scope>
</reference>
<reference key="9">
    <citation type="journal article" date="2002" name="Plant Mol. Biol.">
        <title>Multi-protein complexes in eukaryotic gene transcription.</title>
        <authorList>
            <person name="Martinez E."/>
        </authorList>
    </citation>
    <scope>FUNCTION</scope>
</reference>
<reference key="10">
    <citation type="journal article" date="2003" name="Nature">
        <title>Global analysis of protein localization in budding yeast.</title>
        <authorList>
            <person name="Huh W.-K."/>
            <person name="Falvo J.V."/>
            <person name="Gerke L.C."/>
            <person name="Carroll A.S."/>
            <person name="Howson R.W."/>
            <person name="Weissman J.S."/>
            <person name="O'Shea E.K."/>
        </authorList>
    </citation>
    <scope>SUBCELLULAR LOCATION [LARGE SCALE ANALYSIS]</scope>
</reference>
<reference key="11">
    <citation type="journal article" date="2003" name="Nature">
        <title>Global analysis of protein expression in yeast.</title>
        <authorList>
            <person name="Ghaemmaghami S."/>
            <person name="Huh W.-K."/>
            <person name="Bower K."/>
            <person name="Howson R.W."/>
            <person name="Belle A."/>
            <person name="Dephoure N."/>
            <person name="O'Shea E.K."/>
            <person name="Weissman J.S."/>
        </authorList>
    </citation>
    <scope>LEVEL OF PROTEIN EXPRESSION [LARGE SCALE ANALYSIS]</scope>
</reference>
<reference key="12">
    <citation type="journal article" date="2002" name="EMBO J.">
        <title>Mapping histone fold TAFs within yeast TFIID.</title>
        <authorList>
            <person name="Leurent C."/>
            <person name="Sanders S.L."/>
            <person name="Ruhlmann C."/>
            <person name="Mallouh V."/>
            <person name="Weil P.A."/>
            <person name="Kirschner D.B."/>
            <person name="Tora L."/>
            <person name="Schultz P."/>
        </authorList>
    </citation>
    <scope>3D-STRUCTURE</scope>
    <scope>ELECTRON MICROSCOPY OF TFIID</scope>
</reference>
<reference key="13">
    <citation type="journal article" date="2009" name="Science">
        <title>Global analysis of Cdk1 substrate phosphorylation sites provides insights into evolution.</title>
        <authorList>
            <person name="Holt L.J."/>
            <person name="Tuch B.B."/>
            <person name="Villen J."/>
            <person name="Johnson A.D."/>
            <person name="Gygi S.P."/>
            <person name="Morgan D.O."/>
        </authorList>
    </citation>
    <scope>PHOSPHORYLATION [LARGE SCALE ANALYSIS] AT THR-131</scope>
    <scope>IDENTIFICATION BY MASS SPECTROMETRY [LARGE SCALE ANALYSIS]</scope>
</reference>
<proteinExistence type="evidence at protein level"/>
<organism>
    <name type="scientific">Saccharomyces cerevisiae (strain ATCC 204508 / S288c)</name>
    <name type="common">Baker's yeast</name>
    <dbReference type="NCBI Taxonomy" id="559292"/>
    <lineage>
        <taxon>Eukaryota</taxon>
        <taxon>Fungi</taxon>
        <taxon>Dikarya</taxon>
        <taxon>Ascomycota</taxon>
        <taxon>Saccharomycotina</taxon>
        <taxon>Saccharomycetes</taxon>
        <taxon>Saccharomycetales</taxon>
        <taxon>Saccharomycetaceae</taxon>
        <taxon>Saccharomyces</taxon>
    </lineage>
</organism>
<comment type="function">
    <text evidence="3 4 5 6 9">Functions as a component of the DNA-binding general transcription factor complex TFIID. Binding of TFIID to a promoter (with or without TATA element) is the initial step in pre-initiation complex (PIC) formation. TFIID plays a key role in the regulation of gene expression by RNA polymerase II through different activities such as transcription activator interaction, core promoter recognition and selectivity, TFIIA and TFIIB interaction, chromatin modification (histone acetylation by TAF1), facilitation of DNA opening and initiation of transcription.</text>
</comment>
<comment type="subunit">
    <text evidence="3">In TFIID, TAF13 heterodimerizes with TAF11, but they do not seem to form a heterotetramer like TAF6/TAF9. The 1.2 MDa TFIID complex is composed of TATA binding protein (TBP) and the 14 TBP-associated factors. One copy of each TAF1, TAF2, TAF3, TAF7, TAF8, TAF11, TAF13, two copies of each TAF4, TAF5, TAF6, TAF9, TAF10, TAF12, and three copies of TAF14.</text>
</comment>
<comment type="interaction">
    <interactant intactId="EBI-18897">
        <id>P11747</id>
    </interactant>
    <interactant intactId="EBI-18889">
        <id>Q12030</id>
        <label>TAF10</label>
    </interactant>
    <organismsDiffer>false</organismsDiffer>
    <experiments>8</experiments>
</comment>
<comment type="interaction">
    <interactant intactId="EBI-18897">
        <id>P11747</id>
    </interactant>
    <interactant intactId="EBI-18884">
        <id>Q04226</id>
        <label>TAF11</label>
    </interactant>
    <organismsDiffer>false</organismsDiffer>
    <experiments>4</experiments>
</comment>
<comment type="subcellular location">
    <subcellularLocation>
        <location evidence="7">Nucleus</location>
    </subcellularLocation>
</comment>
<comment type="miscellaneous">
    <text evidence="8">Present with 2100 molecules/cell in log phase SD medium.</text>
</comment>
<comment type="similarity">
    <text evidence="10">Belongs to the TAF13 family.</text>
</comment>
<evidence type="ECO:0000255" key="1"/>
<evidence type="ECO:0000256" key="2">
    <source>
        <dbReference type="SAM" id="MobiDB-lite"/>
    </source>
</evidence>
<evidence type="ECO:0000269" key="3">
    <source>
    </source>
</evidence>
<evidence type="ECO:0000269" key="4">
    <source>
    </source>
</evidence>
<evidence type="ECO:0000269" key="5">
    <source>
    </source>
</evidence>
<evidence type="ECO:0000269" key="6">
    <source>
    </source>
</evidence>
<evidence type="ECO:0000269" key="7">
    <source>
    </source>
</evidence>
<evidence type="ECO:0000269" key="8">
    <source>
    </source>
</evidence>
<evidence type="ECO:0000269" key="9">
    <source>
    </source>
</evidence>
<evidence type="ECO:0000305" key="10"/>
<evidence type="ECO:0007744" key="11">
    <source>
    </source>
</evidence>
<sequence>MSRKLKKTNLFNKDVSSLLYAYGDVPQPLQATVQCLDELVSGYLVDVCTNAFHTAQNSQRNKLRLEDFKFALRKDPIKLGRAEELIATNKLITEAKKQFNETDNQNSLKRYREEDEEGDEMEEDEDEQQVTDDDEEAAGRNSAKQSTDSKATKIRKQGPKNLKKTKK</sequence>
<keyword id="KW-0175">Coiled coil</keyword>
<keyword id="KW-0539">Nucleus</keyword>
<keyword id="KW-0597">Phosphoprotein</keyword>
<keyword id="KW-1185">Reference proteome</keyword>
<keyword id="KW-0804">Transcription</keyword>
<keyword id="KW-0805">Transcription regulation</keyword>